<reference key="1">
    <citation type="submission" date="2008-08" db="EMBL/GenBank/DDBJ databases">
        <title>The complete genome sequence of Coprothermobacter proteolyticus strain ATCC 5245 / DSM 5265 / BT.</title>
        <authorList>
            <person name="Dodson R.J."/>
            <person name="Durkin A.S."/>
            <person name="Wu M."/>
            <person name="Eisen J."/>
            <person name="Sutton G."/>
        </authorList>
    </citation>
    <scope>NUCLEOTIDE SEQUENCE [LARGE SCALE GENOMIC DNA]</scope>
    <source>
        <strain>ATCC 35245 / DSM 5265 / OCM 4 / BT</strain>
    </source>
</reference>
<name>ACKA_COPPD</name>
<proteinExistence type="inferred from homology"/>
<dbReference type="EC" id="2.7.2.1" evidence="1"/>
<dbReference type="EMBL" id="CP001145">
    <property type="protein sequence ID" value="ACI17617.1"/>
    <property type="molecule type" value="Genomic_DNA"/>
</dbReference>
<dbReference type="RefSeq" id="WP_012544269.1">
    <property type="nucleotide sequence ID" value="NC_011295.1"/>
</dbReference>
<dbReference type="SMR" id="B5Y7W0"/>
<dbReference type="STRING" id="309798.COPRO5265_0498"/>
<dbReference type="KEGG" id="cpo:COPRO5265_0498"/>
<dbReference type="eggNOG" id="COG0282">
    <property type="taxonomic scope" value="Bacteria"/>
</dbReference>
<dbReference type="HOGENOM" id="CLU_020352_0_1_9"/>
<dbReference type="OrthoDB" id="9802453at2"/>
<dbReference type="UniPathway" id="UPA00340">
    <property type="reaction ID" value="UER00458"/>
</dbReference>
<dbReference type="Proteomes" id="UP000001732">
    <property type="component" value="Chromosome"/>
</dbReference>
<dbReference type="GO" id="GO:0005737">
    <property type="term" value="C:cytoplasm"/>
    <property type="evidence" value="ECO:0007669"/>
    <property type="project" value="UniProtKB-SubCell"/>
</dbReference>
<dbReference type="GO" id="GO:0008776">
    <property type="term" value="F:acetate kinase activity"/>
    <property type="evidence" value="ECO:0007669"/>
    <property type="project" value="UniProtKB-UniRule"/>
</dbReference>
<dbReference type="GO" id="GO:0005524">
    <property type="term" value="F:ATP binding"/>
    <property type="evidence" value="ECO:0007669"/>
    <property type="project" value="UniProtKB-KW"/>
</dbReference>
<dbReference type="GO" id="GO:0000287">
    <property type="term" value="F:magnesium ion binding"/>
    <property type="evidence" value="ECO:0007669"/>
    <property type="project" value="UniProtKB-UniRule"/>
</dbReference>
<dbReference type="GO" id="GO:0006083">
    <property type="term" value="P:acetate metabolic process"/>
    <property type="evidence" value="ECO:0007669"/>
    <property type="project" value="TreeGrafter"/>
</dbReference>
<dbReference type="GO" id="GO:0006085">
    <property type="term" value="P:acetyl-CoA biosynthetic process"/>
    <property type="evidence" value="ECO:0007669"/>
    <property type="project" value="UniProtKB-UniRule"/>
</dbReference>
<dbReference type="CDD" id="cd24010">
    <property type="entry name" value="ASKHA_NBD_AcK_PK"/>
    <property type="match status" value="1"/>
</dbReference>
<dbReference type="Gene3D" id="3.30.420.40">
    <property type="match status" value="2"/>
</dbReference>
<dbReference type="HAMAP" id="MF_00020">
    <property type="entry name" value="Acetate_kinase"/>
    <property type="match status" value="1"/>
</dbReference>
<dbReference type="InterPro" id="IPR004372">
    <property type="entry name" value="Ac/propionate_kinase"/>
</dbReference>
<dbReference type="InterPro" id="IPR000890">
    <property type="entry name" value="Aliphatic_acid_kin_short-chain"/>
</dbReference>
<dbReference type="InterPro" id="IPR023865">
    <property type="entry name" value="Aliphatic_acid_kinase_CS"/>
</dbReference>
<dbReference type="InterPro" id="IPR043129">
    <property type="entry name" value="ATPase_NBD"/>
</dbReference>
<dbReference type="NCBIfam" id="TIGR00016">
    <property type="entry name" value="ackA"/>
    <property type="match status" value="1"/>
</dbReference>
<dbReference type="PANTHER" id="PTHR21060">
    <property type="entry name" value="ACETATE KINASE"/>
    <property type="match status" value="1"/>
</dbReference>
<dbReference type="PANTHER" id="PTHR21060:SF15">
    <property type="entry name" value="ACETATE KINASE-RELATED"/>
    <property type="match status" value="1"/>
</dbReference>
<dbReference type="Pfam" id="PF00871">
    <property type="entry name" value="Acetate_kinase"/>
    <property type="match status" value="1"/>
</dbReference>
<dbReference type="PIRSF" id="PIRSF000722">
    <property type="entry name" value="Acetate_prop_kin"/>
    <property type="match status" value="1"/>
</dbReference>
<dbReference type="PRINTS" id="PR00471">
    <property type="entry name" value="ACETATEKNASE"/>
</dbReference>
<dbReference type="SUPFAM" id="SSF53067">
    <property type="entry name" value="Actin-like ATPase domain"/>
    <property type="match status" value="2"/>
</dbReference>
<dbReference type="PROSITE" id="PS01075">
    <property type="entry name" value="ACETATE_KINASE_1"/>
    <property type="match status" value="1"/>
</dbReference>
<dbReference type="PROSITE" id="PS01076">
    <property type="entry name" value="ACETATE_KINASE_2"/>
    <property type="match status" value="1"/>
</dbReference>
<sequence length="400" mass="44202">MKILVLNAGSSSLKFQLFDMEDESVMAKGIVERIGLDKPFLSYSKGTDKIKFDKEEPINHKDALQWVLNTLTSHEYGVITTLQEIGAVGHRVVHGGEEFTGSVLITEEVIEALERNKNLAPLHNPPNLTGIYATKAVLPEVPMVGVFDTAFHATMPERAYLYALPIELYEKYKVRRYGFHGTSHRYVAMEAARRLGKTLSELRIISAHLGNGASVCAIQGGKSIDTSMGFTPLEGLVMGTRSGDLDPAIPIWMMRELGMSFDEVDNLLNKKSGVFGLVRGRSFDMRDIEDWMAAGDEEAKKAMEVYCYRLKKYIGGYAAVMGGVDVLIFTAGVGENSPIVREMVCEGLEFLGIKLDKEKNNSRGDAIISAADSKVVVMSIKTNEELMIARDTYEIVRGLT</sequence>
<protein>
    <recommendedName>
        <fullName evidence="1">Acetate kinase</fullName>
        <ecNumber evidence="1">2.7.2.1</ecNumber>
    </recommendedName>
    <alternativeName>
        <fullName evidence="1">Acetokinase</fullName>
    </alternativeName>
</protein>
<organism>
    <name type="scientific">Coprothermobacter proteolyticus (strain ATCC 35245 / DSM 5265 / OCM 4 / BT)</name>
    <dbReference type="NCBI Taxonomy" id="309798"/>
    <lineage>
        <taxon>Bacteria</taxon>
        <taxon>Pseudomonadati</taxon>
        <taxon>Coprothermobacterota</taxon>
        <taxon>Coprothermobacteria</taxon>
        <taxon>Coprothermobacterales</taxon>
        <taxon>Coprothermobacteraceae</taxon>
        <taxon>Coprothermobacter</taxon>
    </lineage>
</organism>
<evidence type="ECO:0000255" key="1">
    <source>
        <dbReference type="HAMAP-Rule" id="MF_00020"/>
    </source>
</evidence>
<keyword id="KW-0067">ATP-binding</keyword>
<keyword id="KW-0963">Cytoplasm</keyword>
<keyword id="KW-0418">Kinase</keyword>
<keyword id="KW-0460">Magnesium</keyword>
<keyword id="KW-0479">Metal-binding</keyword>
<keyword id="KW-0547">Nucleotide-binding</keyword>
<keyword id="KW-1185">Reference proteome</keyword>
<keyword id="KW-0808">Transferase</keyword>
<accession>B5Y7W0</accession>
<feature type="chain" id="PRO_1000089970" description="Acetate kinase">
    <location>
        <begin position="1"/>
        <end position="400"/>
    </location>
</feature>
<feature type="active site" description="Proton donor/acceptor" evidence="1">
    <location>
        <position position="148"/>
    </location>
</feature>
<feature type="binding site" evidence="1">
    <location>
        <position position="7"/>
    </location>
    <ligand>
        <name>Mg(2+)</name>
        <dbReference type="ChEBI" id="CHEBI:18420"/>
    </ligand>
</feature>
<feature type="binding site" evidence="1">
    <location>
        <position position="14"/>
    </location>
    <ligand>
        <name>ATP</name>
        <dbReference type="ChEBI" id="CHEBI:30616"/>
    </ligand>
</feature>
<feature type="binding site" evidence="1">
    <location>
        <position position="91"/>
    </location>
    <ligand>
        <name>substrate</name>
    </ligand>
</feature>
<feature type="binding site" evidence="1">
    <location>
        <begin position="208"/>
        <end position="212"/>
    </location>
    <ligand>
        <name>ATP</name>
        <dbReference type="ChEBI" id="CHEBI:30616"/>
    </ligand>
</feature>
<feature type="binding site" evidence="1">
    <location>
        <begin position="284"/>
        <end position="286"/>
    </location>
    <ligand>
        <name>ATP</name>
        <dbReference type="ChEBI" id="CHEBI:30616"/>
    </ligand>
</feature>
<feature type="binding site" evidence="1">
    <location>
        <begin position="332"/>
        <end position="336"/>
    </location>
    <ligand>
        <name>ATP</name>
        <dbReference type="ChEBI" id="CHEBI:30616"/>
    </ligand>
</feature>
<feature type="binding site" evidence="1">
    <location>
        <position position="384"/>
    </location>
    <ligand>
        <name>Mg(2+)</name>
        <dbReference type="ChEBI" id="CHEBI:18420"/>
    </ligand>
</feature>
<feature type="site" description="Transition state stabilizer" evidence="1">
    <location>
        <position position="180"/>
    </location>
</feature>
<feature type="site" description="Transition state stabilizer" evidence="1">
    <location>
        <position position="241"/>
    </location>
</feature>
<comment type="function">
    <text evidence="1">Catalyzes the formation of acetyl phosphate from acetate and ATP. Can also catalyze the reverse reaction.</text>
</comment>
<comment type="catalytic activity">
    <reaction evidence="1">
        <text>acetate + ATP = acetyl phosphate + ADP</text>
        <dbReference type="Rhea" id="RHEA:11352"/>
        <dbReference type="ChEBI" id="CHEBI:22191"/>
        <dbReference type="ChEBI" id="CHEBI:30089"/>
        <dbReference type="ChEBI" id="CHEBI:30616"/>
        <dbReference type="ChEBI" id="CHEBI:456216"/>
        <dbReference type="EC" id="2.7.2.1"/>
    </reaction>
</comment>
<comment type="cofactor">
    <cofactor evidence="1">
        <name>Mg(2+)</name>
        <dbReference type="ChEBI" id="CHEBI:18420"/>
    </cofactor>
    <cofactor evidence="1">
        <name>Mn(2+)</name>
        <dbReference type="ChEBI" id="CHEBI:29035"/>
    </cofactor>
    <text evidence="1">Mg(2+). Can also accept Mn(2+).</text>
</comment>
<comment type="pathway">
    <text evidence="1">Metabolic intermediate biosynthesis; acetyl-CoA biosynthesis; acetyl-CoA from acetate: step 1/2.</text>
</comment>
<comment type="subunit">
    <text evidence="1">Homodimer.</text>
</comment>
<comment type="subcellular location">
    <subcellularLocation>
        <location evidence="1">Cytoplasm</location>
    </subcellularLocation>
</comment>
<comment type="similarity">
    <text evidence="1">Belongs to the acetokinase family.</text>
</comment>
<gene>
    <name evidence="1" type="primary">ackA</name>
    <name type="ordered locus">COPRO5265_0498</name>
</gene>